<name>NNRD_PHANO</name>
<sequence>MASATRKDLLKKVYNMVPPMLESFHKGQLGRVAVIGGSEDYTGAPYFSAMASAKLGCDMSHVICEPGAGAVIKTYSPNLMVHPYMRQSKNVGQNENIESIKSEVVAMLSRLHVVVIGPGLGRDKLMQDTCAEVIQEARKQGIPFVLDADGLYLAQTRPELVDGCTECILTPNVVEFGRLAKAKGVNVDEGDPSELCSKLAKAFGGVTIIQKGAKDYISNGSQTLISEGEGGLKRSGGQGDTLTGSLATLLAYRKAYHDKIWDHGTNMEPSETLALAAYGGSCITRECSKLAYKEKGRSLQAADLTEHVHTAFLNVIGEKEETPKL</sequence>
<dbReference type="EC" id="4.2.1.93" evidence="1"/>
<dbReference type="EMBL" id="CH445330">
    <property type="protein sequence ID" value="EAT87966.1"/>
    <property type="molecule type" value="Genomic_DNA"/>
</dbReference>
<dbReference type="RefSeq" id="XP_001794629.1">
    <property type="nucleotide sequence ID" value="XM_001794577.1"/>
</dbReference>
<dbReference type="SMR" id="Q0UVK8"/>
<dbReference type="FunCoup" id="Q0UVK8">
    <property type="interactions" value="134"/>
</dbReference>
<dbReference type="STRING" id="321614.Q0UVK8"/>
<dbReference type="EnsemblFungi" id="SNOT_04206">
    <property type="protein sequence ID" value="SNOT_04206"/>
    <property type="gene ID" value="SNOG_04206"/>
</dbReference>
<dbReference type="GeneID" id="5971497"/>
<dbReference type="KEGG" id="pno:SNOG_04206"/>
<dbReference type="VEuPathDB" id="FungiDB:JI435_042060"/>
<dbReference type="eggNOG" id="KOG3974">
    <property type="taxonomic scope" value="Eukaryota"/>
</dbReference>
<dbReference type="HOGENOM" id="CLU_030651_0_0_1"/>
<dbReference type="InParanoid" id="Q0UVK8"/>
<dbReference type="OMA" id="WRAAYHN"/>
<dbReference type="OrthoDB" id="8110916at2759"/>
<dbReference type="Proteomes" id="UP000001055">
    <property type="component" value="Unassembled WGS sequence"/>
</dbReference>
<dbReference type="GO" id="GO:0005737">
    <property type="term" value="C:cytoplasm"/>
    <property type="evidence" value="ECO:0007669"/>
    <property type="project" value="UniProtKB-SubCell"/>
</dbReference>
<dbReference type="GO" id="GO:0005524">
    <property type="term" value="F:ATP binding"/>
    <property type="evidence" value="ECO:0007669"/>
    <property type="project" value="UniProtKB-KW"/>
</dbReference>
<dbReference type="GO" id="GO:0047453">
    <property type="term" value="F:ATP-dependent NAD(P)H-hydrate dehydratase activity"/>
    <property type="evidence" value="ECO:0000318"/>
    <property type="project" value="GO_Central"/>
</dbReference>
<dbReference type="GO" id="GO:0110051">
    <property type="term" value="P:metabolite repair"/>
    <property type="evidence" value="ECO:0000318"/>
    <property type="project" value="GO_Central"/>
</dbReference>
<dbReference type="GO" id="GO:0046496">
    <property type="term" value="P:nicotinamide nucleotide metabolic process"/>
    <property type="evidence" value="ECO:0007669"/>
    <property type="project" value="UniProtKB-UniRule"/>
</dbReference>
<dbReference type="CDD" id="cd01171">
    <property type="entry name" value="YXKO-related"/>
    <property type="match status" value="1"/>
</dbReference>
<dbReference type="FunFam" id="3.40.1190.20:FF:000043">
    <property type="entry name" value="ATP-dependent (S)-NAD(P)H-hydrate dehydratase"/>
    <property type="match status" value="1"/>
</dbReference>
<dbReference type="Gene3D" id="3.40.1190.20">
    <property type="match status" value="1"/>
</dbReference>
<dbReference type="HAMAP" id="MF_01965">
    <property type="entry name" value="NADHX_dehydratase"/>
    <property type="match status" value="1"/>
</dbReference>
<dbReference type="InterPro" id="IPR017953">
    <property type="entry name" value="Carbohydrate_kinase_pred_CS"/>
</dbReference>
<dbReference type="InterPro" id="IPR000631">
    <property type="entry name" value="CARKD"/>
</dbReference>
<dbReference type="InterPro" id="IPR029056">
    <property type="entry name" value="Ribokinase-like"/>
</dbReference>
<dbReference type="NCBIfam" id="TIGR00196">
    <property type="entry name" value="yjeF_cterm"/>
    <property type="match status" value="1"/>
</dbReference>
<dbReference type="PANTHER" id="PTHR12592:SF0">
    <property type="entry name" value="ATP-DEPENDENT (S)-NAD(P)H-HYDRATE DEHYDRATASE"/>
    <property type="match status" value="1"/>
</dbReference>
<dbReference type="PANTHER" id="PTHR12592">
    <property type="entry name" value="ATP-DEPENDENT (S)-NAD(P)H-HYDRATE DEHYDRATASE FAMILY MEMBER"/>
    <property type="match status" value="1"/>
</dbReference>
<dbReference type="Pfam" id="PF01256">
    <property type="entry name" value="Carb_kinase"/>
    <property type="match status" value="1"/>
</dbReference>
<dbReference type="SUPFAM" id="SSF53613">
    <property type="entry name" value="Ribokinase-like"/>
    <property type="match status" value="1"/>
</dbReference>
<dbReference type="PROSITE" id="PS01049">
    <property type="entry name" value="YJEF_C_1"/>
    <property type="match status" value="1"/>
</dbReference>
<dbReference type="PROSITE" id="PS01050">
    <property type="entry name" value="YJEF_C_2"/>
    <property type="match status" value="1"/>
</dbReference>
<dbReference type="PROSITE" id="PS51383">
    <property type="entry name" value="YJEF_C_3"/>
    <property type="match status" value="1"/>
</dbReference>
<comment type="function">
    <text evidence="1">Catalyzes the dehydration of the S-form of NAD(P)HX at the expense of ATP, which is converted to ADP. Together with NAD(P)HX epimerase, which catalyzes the epimerization of the S- and R-forms, the enzyme allows the repair of both epimers of NAD(P)HX, a damaged form of NAD(P)H that is a result of enzymatic or heat-dependent hydration.</text>
</comment>
<comment type="catalytic activity">
    <reaction evidence="1">
        <text>(6S)-NADHX + ATP = ADP + phosphate + NADH + H(+)</text>
        <dbReference type="Rhea" id="RHEA:19017"/>
        <dbReference type="ChEBI" id="CHEBI:15378"/>
        <dbReference type="ChEBI" id="CHEBI:30616"/>
        <dbReference type="ChEBI" id="CHEBI:43474"/>
        <dbReference type="ChEBI" id="CHEBI:57945"/>
        <dbReference type="ChEBI" id="CHEBI:64074"/>
        <dbReference type="ChEBI" id="CHEBI:456216"/>
        <dbReference type="EC" id="4.2.1.93"/>
    </reaction>
</comment>
<comment type="catalytic activity">
    <reaction>
        <text>(6S)-NADPHX + ATP = ADP + phosphate + NADPH + H(+)</text>
        <dbReference type="Rhea" id="RHEA:32231"/>
        <dbReference type="ChEBI" id="CHEBI:15378"/>
        <dbReference type="ChEBI" id="CHEBI:30616"/>
        <dbReference type="ChEBI" id="CHEBI:43474"/>
        <dbReference type="ChEBI" id="CHEBI:57783"/>
        <dbReference type="ChEBI" id="CHEBI:64076"/>
        <dbReference type="ChEBI" id="CHEBI:456216"/>
        <dbReference type="EC" id="4.2.1.93"/>
    </reaction>
</comment>
<comment type="cofactor">
    <cofactor evidence="1">
        <name>Mg(2+)</name>
        <dbReference type="ChEBI" id="CHEBI:18420"/>
    </cofactor>
</comment>
<comment type="subcellular location">
    <subcellularLocation>
        <location evidence="1">Cytoplasm</location>
    </subcellularLocation>
</comment>
<comment type="similarity">
    <text evidence="1">Belongs to the NnrD/CARKD family.</text>
</comment>
<evidence type="ECO:0000255" key="1">
    <source>
        <dbReference type="HAMAP-Rule" id="MF_03157"/>
    </source>
</evidence>
<proteinExistence type="inferred from homology"/>
<feature type="chain" id="PRO_0000416188" description="ATP-dependent (S)-NAD(P)H-hydrate dehydratase">
    <location>
        <begin position="1"/>
        <end position="325"/>
    </location>
</feature>
<feature type="domain" description="YjeF C-terminal" evidence="1">
    <location>
        <begin position="9"/>
        <end position="315"/>
    </location>
</feature>
<feature type="binding site" evidence="1">
    <location>
        <position position="119"/>
    </location>
    <ligand>
        <name>(6S)-NADPHX</name>
        <dbReference type="ChEBI" id="CHEBI:64076"/>
    </ligand>
</feature>
<feature type="binding site" evidence="1">
    <location>
        <begin position="172"/>
        <end position="178"/>
    </location>
    <ligand>
        <name>(6S)-NADPHX</name>
        <dbReference type="ChEBI" id="CHEBI:64076"/>
    </ligand>
</feature>
<feature type="binding site" evidence="1">
    <location>
        <begin position="211"/>
        <end position="215"/>
    </location>
    <ligand>
        <name>ATP</name>
        <dbReference type="ChEBI" id="CHEBI:30616"/>
    </ligand>
</feature>
<feature type="binding site" evidence="1">
    <location>
        <begin position="230"/>
        <end position="239"/>
    </location>
    <ligand>
        <name>ATP</name>
        <dbReference type="ChEBI" id="CHEBI:30616"/>
    </ligand>
</feature>
<feature type="binding site" evidence="1">
    <location>
        <position position="240"/>
    </location>
    <ligand>
        <name>(6S)-NADPHX</name>
        <dbReference type="ChEBI" id="CHEBI:64076"/>
    </ligand>
</feature>
<gene>
    <name type="ORF">SNOG_04206</name>
</gene>
<keyword id="KW-0067">ATP-binding</keyword>
<keyword id="KW-0963">Cytoplasm</keyword>
<keyword id="KW-0456">Lyase</keyword>
<keyword id="KW-0520">NAD</keyword>
<keyword id="KW-0521">NADP</keyword>
<keyword id="KW-0547">Nucleotide-binding</keyword>
<keyword id="KW-0597">Phosphoprotein</keyword>
<accession>Q0UVK8</accession>
<protein>
    <recommendedName>
        <fullName evidence="1">ATP-dependent (S)-NAD(P)H-hydrate dehydratase</fullName>
        <ecNumber evidence="1">4.2.1.93</ecNumber>
    </recommendedName>
    <alternativeName>
        <fullName evidence="1">ATP-dependent NAD(P)HX dehydratase</fullName>
    </alternativeName>
</protein>
<reference key="1">
    <citation type="journal article" date="2007" name="Plant Cell">
        <title>Dothideomycete-plant interactions illuminated by genome sequencing and EST analysis of the wheat pathogen Stagonospora nodorum.</title>
        <authorList>
            <person name="Hane J.K."/>
            <person name="Lowe R.G.T."/>
            <person name="Solomon P.S."/>
            <person name="Tan K.-C."/>
            <person name="Schoch C.L."/>
            <person name="Spatafora J.W."/>
            <person name="Crous P.W."/>
            <person name="Kodira C.D."/>
            <person name="Birren B.W."/>
            <person name="Galagan J.E."/>
            <person name="Torriani S.F.F."/>
            <person name="McDonald B.A."/>
            <person name="Oliver R.P."/>
        </authorList>
    </citation>
    <scope>NUCLEOTIDE SEQUENCE [LARGE SCALE GENOMIC DNA]</scope>
    <source>
        <strain>SN15 / ATCC MYA-4574 / FGSC 10173</strain>
    </source>
</reference>
<organism>
    <name type="scientific">Phaeosphaeria nodorum (strain SN15 / ATCC MYA-4574 / FGSC 10173)</name>
    <name type="common">Glume blotch fungus</name>
    <name type="synonym">Parastagonospora nodorum</name>
    <dbReference type="NCBI Taxonomy" id="321614"/>
    <lineage>
        <taxon>Eukaryota</taxon>
        <taxon>Fungi</taxon>
        <taxon>Dikarya</taxon>
        <taxon>Ascomycota</taxon>
        <taxon>Pezizomycotina</taxon>
        <taxon>Dothideomycetes</taxon>
        <taxon>Pleosporomycetidae</taxon>
        <taxon>Pleosporales</taxon>
        <taxon>Pleosporineae</taxon>
        <taxon>Phaeosphaeriaceae</taxon>
        <taxon>Parastagonospora</taxon>
    </lineage>
</organism>